<protein>
    <recommendedName>
        <fullName evidence="1">UvrABC system protein B</fullName>
        <shortName evidence="1">Protein UvrB</shortName>
    </recommendedName>
    <alternativeName>
        <fullName evidence="1">Excinuclease ABC subunit B</fullName>
    </alternativeName>
</protein>
<comment type="function">
    <text evidence="1">The UvrABC repair system catalyzes the recognition and processing of DNA lesions. A damage recognition complex composed of 2 UvrA and 2 UvrB subunits scans DNA for abnormalities. Upon binding of the UvrA(2)B(2) complex to a putative damaged site, the DNA wraps around one UvrB monomer. DNA wrap is dependent on ATP binding by UvrB and probably causes local melting of the DNA helix, facilitating insertion of UvrB beta-hairpin between the DNA strands. Then UvrB probes one DNA strand for the presence of a lesion. If a lesion is found the UvrA subunits dissociate and the UvrB-DNA preincision complex is formed. This complex is subsequently bound by UvrC and the second UvrB is released. If no lesion is found, the DNA wraps around the other UvrB subunit that will check the other stand for damage.</text>
</comment>
<comment type="subunit">
    <text evidence="1">Forms a heterotetramer with UvrA during the search for lesions. Interacts with UvrC in an incision complex.</text>
</comment>
<comment type="subcellular location">
    <subcellularLocation>
        <location evidence="1">Cytoplasm</location>
    </subcellularLocation>
</comment>
<comment type="domain">
    <text evidence="1">The beta-hairpin motif is involved in DNA binding.</text>
</comment>
<comment type="similarity">
    <text evidence="1">Belongs to the UvrB family.</text>
</comment>
<dbReference type="EMBL" id="CP000011">
    <property type="protein sequence ID" value="AAU46751.1"/>
    <property type="molecule type" value="Genomic_DNA"/>
</dbReference>
<dbReference type="RefSeq" id="WP_004199587.1">
    <property type="nucleotide sequence ID" value="NC_006349.2"/>
</dbReference>
<dbReference type="RefSeq" id="YP_105572.1">
    <property type="nucleotide sequence ID" value="NC_006349.2"/>
</dbReference>
<dbReference type="SMR" id="Q62CK6"/>
<dbReference type="GeneID" id="93062475"/>
<dbReference type="KEGG" id="bma:BMAA0880"/>
<dbReference type="PATRIC" id="fig|243160.12.peg.4401"/>
<dbReference type="eggNOG" id="COG0556">
    <property type="taxonomic scope" value="Bacteria"/>
</dbReference>
<dbReference type="HOGENOM" id="CLU_009621_2_1_4"/>
<dbReference type="Proteomes" id="UP000006693">
    <property type="component" value="Chromosome 2"/>
</dbReference>
<dbReference type="GO" id="GO:0005737">
    <property type="term" value="C:cytoplasm"/>
    <property type="evidence" value="ECO:0007669"/>
    <property type="project" value="UniProtKB-SubCell"/>
</dbReference>
<dbReference type="GO" id="GO:0009380">
    <property type="term" value="C:excinuclease repair complex"/>
    <property type="evidence" value="ECO:0007669"/>
    <property type="project" value="InterPro"/>
</dbReference>
<dbReference type="GO" id="GO:0005524">
    <property type="term" value="F:ATP binding"/>
    <property type="evidence" value="ECO:0007669"/>
    <property type="project" value="UniProtKB-UniRule"/>
</dbReference>
<dbReference type="GO" id="GO:0016887">
    <property type="term" value="F:ATP hydrolysis activity"/>
    <property type="evidence" value="ECO:0007669"/>
    <property type="project" value="InterPro"/>
</dbReference>
<dbReference type="GO" id="GO:0003677">
    <property type="term" value="F:DNA binding"/>
    <property type="evidence" value="ECO:0007669"/>
    <property type="project" value="UniProtKB-UniRule"/>
</dbReference>
<dbReference type="GO" id="GO:0009381">
    <property type="term" value="F:excinuclease ABC activity"/>
    <property type="evidence" value="ECO:0007669"/>
    <property type="project" value="UniProtKB-UniRule"/>
</dbReference>
<dbReference type="GO" id="GO:0006289">
    <property type="term" value="P:nucleotide-excision repair"/>
    <property type="evidence" value="ECO:0007669"/>
    <property type="project" value="UniProtKB-UniRule"/>
</dbReference>
<dbReference type="GO" id="GO:0009432">
    <property type="term" value="P:SOS response"/>
    <property type="evidence" value="ECO:0007669"/>
    <property type="project" value="UniProtKB-UniRule"/>
</dbReference>
<dbReference type="CDD" id="cd17916">
    <property type="entry name" value="DEXHc_UvrB"/>
    <property type="match status" value="1"/>
</dbReference>
<dbReference type="CDD" id="cd18790">
    <property type="entry name" value="SF2_C_UvrB"/>
    <property type="match status" value="1"/>
</dbReference>
<dbReference type="Gene3D" id="6.10.140.240">
    <property type="match status" value="1"/>
</dbReference>
<dbReference type="Gene3D" id="3.40.50.300">
    <property type="entry name" value="P-loop containing nucleotide triphosphate hydrolases"/>
    <property type="match status" value="3"/>
</dbReference>
<dbReference type="Gene3D" id="4.10.860.10">
    <property type="entry name" value="UVR domain"/>
    <property type="match status" value="1"/>
</dbReference>
<dbReference type="HAMAP" id="MF_00204">
    <property type="entry name" value="UvrB"/>
    <property type="match status" value="1"/>
</dbReference>
<dbReference type="InterPro" id="IPR006935">
    <property type="entry name" value="Helicase/UvrB_N"/>
</dbReference>
<dbReference type="InterPro" id="IPR014001">
    <property type="entry name" value="Helicase_ATP-bd"/>
</dbReference>
<dbReference type="InterPro" id="IPR001650">
    <property type="entry name" value="Helicase_C-like"/>
</dbReference>
<dbReference type="InterPro" id="IPR027417">
    <property type="entry name" value="P-loop_NTPase"/>
</dbReference>
<dbReference type="InterPro" id="IPR001943">
    <property type="entry name" value="UVR_dom"/>
</dbReference>
<dbReference type="InterPro" id="IPR036876">
    <property type="entry name" value="UVR_dom_sf"/>
</dbReference>
<dbReference type="InterPro" id="IPR004807">
    <property type="entry name" value="UvrB"/>
</dbReference>
<dbReference type="InterPro" id="IPR041471">
    <property type="entry name" value="UvrB_inter"/>
</dbReference>
<dbReference type="InterPro" id="IPR024759">
    <property type="entry name" value="UvrB_YAD/RRR_dom"/>
</dbReference>
<dbReference type="NCBIfam" id="NF003673">
    <property type="entry name" value="PRK05298.1"/>
    <property type="match status" value="1"/>
</dbReference>
<dbReference type="NCBIfam" id="TIGR00631">
    <property type="entry name" value="uvrb"/>
    <property type="match status" value="1"/>
</dbReference>
<dbReference type="PANTHER" id="PTHR24029">
    <property type="entry name" value="UVRABC SYSTEM PROTEIN B"/>
    <property type="match status" value="1"/>
</dbReference>
<dbReference type="PANTHER" id="PTHR24029:SF0">
    <property type="entry name" value="UVRABC SYSTEM PROTEIN B"/>
    <property type="match status" value="1"/>
</dbReference>
<dbReference type="Pfam" id="PF00271">
    <property type="entry name" value="Helicase_C"/>
    <property type="match status" value="1"/>
</dbReference>
<dbReference type="Pfam" id="PF04851">
    <property type="entry name" value="ResIII"/>
    <property type="match status" value="1"/>
</dbReference>
<dbReference type="Pfam" id="PF02151">
    <property type="entry name" value="UVR"/>
    <property type="match status" value="1"/>
</dbReference>
<dbReference type="Pfam" id="PF12344">
    <property type="entry name" value="UvrB"/>
    <property type="match status" value="1"/>
</dbReference>
<dbReference type="Pfam" id="PF17757">
    <property type="entry name" value="UvrB_inter"/>
    <property type="match status" value="1"/>
</dbReference>
<dbReference type="SMART" id="SM00487">
    <property type="entry name" value="DEXDc"/>
    <property type="match status" value="1"/>
</dbReference>
<dbReference type="SMART" id="SM00490">
    <property type="entry name" value="HELICc"/>
    <property type="match status" value="1"/>
</dbReference>
<dbReference type="SUPFAM" id="SSF46600">
    <property type="entry name" value="C-terminal UvrC-binding domain of UvrB"/>
    <property type="match status" value="1"/>
</dbReference>
<dbReference type="SUPFAM" id="SSF52540">
    <property type="entry name" value="P-loop containing nucleoside triphosphate hydrolases"/>
    <property type="match status" value="2"/>
</dbReference>
<dbReference type="PROSITE" id="PS51192">
    <property type="entry name" value="HELICASE_ATP_BIND_1"/>
    <property type="match status" value="1"/>
</dbReference>
<dbReference type="PROSITE" id="PS51194">
    <property type="entry name" value="HELICASE_CTER"/>
    <property type="match status" value="1"/>
</dbReference>
<dbReference type="PROSITE" id="PS50151">
    <property type="entry name" value="UVR"/>
    <property type="match status" value="1"/>
</dbReference>
<organism>
    <name type="scientific">Burkholderia mallei (strain ATCC 23344)</name>
    <dbReference type="NCBI Taxonomy" id="243160"/>
    <lineage>
        <taxon>Bacteria</taxon>
        <taxon>Pseudomonadati</taxon>
        <taxon>Pseudomonadota</taxon>
        <taxon>Betaproteobacteria</taxon>
        <taxon>Burkholderiales</taxon>
        <taxon>Burkholderiaceae</taxon>
        <taxon>Burkholderia</taxon>
        <taxon>pseudomallei group</taxon>
    </lineage>
</organism>
<name>UVRB_BURMA</name>
<gene>
    <name evidence="1" type="primary">uvrB</name>
    <name type="ordered locus">BMAA0880</name>
</gene>
<sequence length="696" mass="79428">MSEHHSDTRDDLDESKFVTFEGSPFQLYQPYPPSGDQPTAIATLVEGVEDGLSFQTLLGVTGSGKTYTMANTIARLGRPAIVFAPNKTLAAQLYAEFREFFPRNAVEYFVSYYDYYQPEAYVPQRDLFIEKDSSINEHIEQMRLSATKSLMERRDVVIVATVSAIYGIGNPSEYHQMILTLRTGDKIGQREVIARLIAMQYTRNEQDFQRGTFRVRGDTIDIFPAEHAEMAVRVELFDDEVDTLHLFDPLTGRVRQKIPRFTVYPSSHYVTPRETVMRAVETIKDELRERLEFFHRDGKLVEAQRLEQRTRFDLEMLQELGFCKGIENYSRHFSGAAPGEPPPTLVDYLPPDALMLLDESHVLIGQLNGMYNGDRARKENLVDYGFRLPSALDNRPLKFPEFERKMRQVVFVSATPADYEQRVSGQTAEQVVRPTGLVDPQIEVRPASTQVDDVLSEITERVKANERVLITVLTKRMAEQLTEFLADHGVKVRYLHSDIDTVERVEIIRDLRLGTFDVLVGINLLREGLDIPEVSLVAILDADKEGFLRAERSLIQTIGRAARNVNGKALLYADRITDSMRRAIDETERRRAKQIAYNEKMGITPRGVVKRIKDIIDGVYNADEARAELKEAQQRAKFEDMSEKQIAKEIKRLEKQMADYAKNLEFEKAAQTRDQLALLRERVFGANVGDHVSGGE</sequence>
<evidence type="ECO:0000255" key="1">
    <source>
        <dbReference type="HAMAP-Rule" id="MF_00204"/>
    </source>
</evidence>
<reference key="1">
    <citation type="journal article" date="2004" name="Proc. Natl. Acad. Sci. U.S.A.">
        <title>Structural flexibility in the Burkholderia mallei genome.</title>
        <authorList>
            <person name="Nierman W.C."/>
            <person name="DeShazer D."/>
            <person name="Kim H.S."/>
            <person name="Tettelin H."/>
            <person name="Nelson K.E."/>
            <person name="Feldblyum T.V."/>
            <person name="Ulrich R.L."/>
            <person name="Ronning C.M."/>
            <person name="Brinkac L.M."/>
            <person name="Daugherty S.C."/>
            <person name="Davidsen T.D."/>
            <person name="DeBoy R.T."/>
            <person name="Dimitrov G."/>
            <person name="Dodson R.J."/>
            <person name="Durkin A.S."/>
            <person name="Gwinn M.L."/>
            <person name="Haft D.H."/>
            <person name="Khouri H.M."/>
            <person name="Kolonay J.F."/>
            <person name="Madupu R."/>
            <person name="Mohammoud Y."/>
            <person name="Nelson W.C."/>
            <person name="Radune D."/>
            <person name="Romero C.M."/>
            <person name="Sarria S."/>
            <person name="Selengut J."/>
            <person name="Shamblin C."/>
            <person name="Sullivan S.A."/>
            <person name="White O."/>
            <person name="Yu Y."/>
            <person name="Zafar N."/>
            <person name="Zhou L."/>
            <person name="Fraser C.M."/>
        </authorList>
    </citation>
    <scope>NUCLEOTIDE SEQUENCE [LARGE SCALE GENOMIC DNA]</scope>
    <source>
        <strain>ATCC 23344</strain>
    </source>
</reference>
<feature type="chain" id="PRO_0000227294" description="UvrABC system protein B">
    <location>
        <begin position="1"/>
        <end position="696"/>
    </location>
</feature>
<feature type="domain" description="Helicase ATP-binding" evidence="1">
    <location>
        <begin position="46"/>
        <end position="433"/>
    </location>
</feature>
<feature type="domain" description="Helicase C-terminal" evidence="1">
    <location>
        <begin position="450"/>
        <end position="616"/>
    </location>
</feature>
<feature type="domain" description="UVR" evidence="1">
    <location>
        <begin position="647"/>
        <end position="682"/>
    </location>
</feature>
<feature type="short sequence motif" description="Beta-hairpin">
    <location>
        <begin position="112"/>
        <end position="135"/>
    </location>
</feature>
<feature type="binding site" evidence="1">
    <location>
        <begin position="59"/>
        <end position="66"/>
    </location>
    <ligand>
        <name>ATP</name>
        <dbReference type="ChEBI" id="CHEBI:30616"/>
    </ligand>
</feature>
<accession>Q62CK6</accession>
<keyword id="KW-0067">ATP-binding</keyword>
<keyword id="KW-0963">Cytoplasm</keyword>
<keyword id="KW-0227">DNA damage</keyword>
<keyword id="KW-0228">DNA excision</keyword>
<keyword id="KW-0234">DNA repair</keyword>
<keyword id="KW-0267">Excision nuclease</keyword>
<keyword id="KW-0547">Nucleotide-binding</keyword>
<keyword id="KW-1185">Reference proteome</keyword>
<keyword id="KW-0742">SOS response</keyword>
<proteinExistence type="inferred from homology"/>